<feature type="chain" id="PRO_1000119814" description="Oxygen-dependent coproporphyrinogen-III oxidase">
    <location>
        <begin position="1"/>
        <end position="303"/>
    </location>
</feature>
<feature type="region of interest" description="Important for dimerization" evidence="1">
    <location>
        <begin position="268"/>
        <end position="303"/>
    </location>
</feature>
<feature type="active site" description="Proton donor" evidence="1">
    <location>
        <position position="131"/>
    </location>
</feature>
<feature type="binding site" evidence="1">
    <location>
        <position position="117"/>
    </location>
    <ligand>
        <name>substrate</name>
    </ligand>
</feature>
<feature type="binding site" evidence="1">
    <location>
        <position position="121"/>
    </location>
    <ligand>
        <name>a divalent metal cation</name>
        <dbReference type="ChEBI" id="CHEBI:60240"/>
    </ligand>
</feature>
<feature type="binding site" evidence="1">
    <location>
        <position position="131"/>
    </location>
    <ligand>
        <name>a divalent metal cation</name>
        <dbReference type="ChEBI" id="CHEBI:60240"/>
    </ligand>
</feature>
<feature type="binding site" evidence="1">
    <location>
        <begin position="133"/>
        <end position="135"/>
    </location>
    <ligand>
        <name>substrate</name>
    </ligand>
</feature>
<feature type="binding site" evidence="1">
    <location>
        <position position="169"/>
    </location>
    <ligand>
        <name>a divalent metal cation</name>
        <dbReference type="ChEBI" id="CHEBI:60240"/>
    </ligand>
</feature>
<feature type="binding site" evidence="1">
    <location>
        <position position="199"/>
    </location>
    <ligand>
        <name>a divalent metal cation</name>
        <dbReference type="ChEBI" id="CHEBI:60240"/>
    </ligand>
</feature>
<feature type="binding site" evidence="1">
    <location>
        <begin position="286"/>
        <end position="288"/>
    </location>
    <ligand>
        <name>substrate</name>
    </ligand>
</feature>
<feature type="site" description="Important for dimerization" evidence="1">
    <location>
        <position position="199"/>
    </location>
</feature>
<keyword id="KW-0963">Cytoplasm</keyword>
<keyword id="KW-0350">Heme biosynthesis</keyword>
<keyword id="KW-0479">Metal-binding</keyword>
<keyword id="KW-0560">Oxidoreductase</keyword>
<keyword id="KW-0627">Porphyrin biosynthesis</keyword>
<keyword id="KW-1185">Reference proteome</keyword>
<accession>Q2K5S3</accession>
<gene>
    <name evidence="1" type="primary">hemF</name>
    <name type="ordered locus">RHE_CH03046</name>
</gene>
<comment type="function">
    <text evidence="1">Involved in the heme biosynthesis. Catalyzes the aerobic oxidative decarboxylation of propionate groups of rings A and B of coproporphyrinogen-III to yield the vinyl groups in protoporphyrinogen-IX.</text>
</comment>
<comment type="catalytic activity">
    <reaction evidence="1">
        <text>coproporphyrinogen III + O2 + 2 H(+) = protoporphyrinogen IX + 2 CO2 + 2 H2O</text>
        <dbReference type="Rhea" id="RHEA:18257"/>
        <dbReference type="ChEBI" id="CHEBI:15377"/>
        <dbReference type="ChEBI" id="CHEBI:15378"/>
        <dbReference type="ChEBI" id="CHEBI:15379"/>
        <dbReference type="ChEBI" id="CHEBI:16526"/>
        <dbReference type="ChEBI" id="CHEBI:57307"/>
        <dbReference type="ChEBI" id="CHEBI:57309"/>
        <dbReference type="EC" id="1.3.3.3"/>
    </reaction>
</comment>
<comment type="cofactor">
    <cofactor evidence="1">
        <name>a divalent metal cation</name>
        <dbReference type="ChEBI" id="CHEBI:60240"/>
    </cofactor>
</comment>
<comment type="pathway">
    <text evidence="1">Porphyrin-containing compound metabolism; protoporphyrin-IX biosynthesis; protoporphyrinogen-IX from coproporphyrinogen-III (O2 route): step 1/1.</text>
</comment>
<comment type="subunit">
    <text evidence="1">Homodimer.</text>
</comment>
<comment type="subcellular location">
    <subcellularLocation>
        <location evidence="1">Cytoplasm</location>
    </subcellularLocation>
</comment>
<comment type="similarity">
    <text evidence="1">Belongs to the aerobic coproporphyrinogen-III oxidase family.</text>
</comment>
<sequence>MERPELPIGLPEDIEEKKTAARNWFEGLRDTICASFEALEDELQGPLSDQEPGRFVAKDWSREEGAGGGGRMSMMEGRVFEKVGVHTSTVHGEFSPDFSAQIPGAKEDPRFWASGISLIAHPVNPNVPAVHMNTRMVVTSSRWFGGGADLTPVLSRRRTQEDEDSQLFHKAMEIACRNHAVADYDAYKAWCDDYFFLKHRNEPRGIGGIFYDWLHSSEEAGGWNADFAFTRDVGRAFAMVYPKIVRSNFNKLWTEADRDEQLIRRGRYVEFNLLYDRGTIFGLKTGGNVESILSSLPPVVRWP</sequence>
<organism>
    <name type="scientific">Rhizobium etli (strain ATCC 51251 / DSM 11541 / JCM 21823 / NBRC 15573 / CFN 42)</name>
    <dbReference type="NCBI Taxonomy" id="347834"/>
    <lineage>
        <taxon>Bacteria</taxon>
        <taxon>Pseudomonadati</taxon>
        <taxon>Pseudomonadota</taxon>
        <taxon>Alphaproteobacteria</taxon>
        <taxon>Hyphomicrobiales</taxon>
        <taxon>Rhizobiaceae</taxon>
        <taxon>Rhizobium/Agrobacterium group</taxon>
        <taxon>Rhizobium</taxon>
    </lineage>
</organism>
<protein>
    <recommendedName>
        <fullName evidence="1">Oxygen-dependent coproporphyrinogen-III oxidase</fullName>
        <shortName evidence="1">CPO</shortName>
        <shortName evidence="1">Coprogen oxidase</shortName>
        <shortName evidence="1">Coproporphyrinogenase</shortName>
        <ecNumber evidence="1">1.3.3.3</ecNumber>
    </recommendedName>
</protein>
<proteinExistence type="inferred from homology"/>
<evidence type="ECO:0000255" key="1">
    <source>
        <dbReference type="HAMAP-Rule" id="MF_00333"/>
    </source>
</evidence>
<name>HEM6_RHIEC</name>
<reference key="1">
    <citation type="journal article" date="2006" name="Proc. Natl. Acad. Sci. U.S.A.">
        <title>The partitioned Rhizobium etli genome: genetic and metabolic redundancy in seven interacting replicons.</title>
        <authorList>
            <person name="Gonzalez V."/>
            <person name="Santamaria R.I."/>
            <person name="Bustos P."/>
            <person name="Hernandez-Gonzalez I."/>
            <person name="Medrano-Soto A."/>
            <person name="Moreno-Hagelsieb G."/>
            <person name="Janga S.C."/>
            <person name="Ramirez M.A."/>
            <person name="Jimenez-Jacinto V."/>
            <person name="Collado-Vides J."/>
            <person name="Davila G."/>
        </authorList>
    </citation>
    <scope>NUCLEOTIDE SEQUENCE [LARGE SCALE GENOMIC DNA]</scope>
    <source>
        <strain>ATCC 51251 / DSM 11541 / JCM 21823 / NBRC 15573 / CFN 42</strain>
    </source>
</reference>
<dbReference type="EC" id="1.3.3.3" evidence="1"/>
<dbReference type="EMBL" id="CP000133">
    <property type="protein sequence ID" value="ABC91813.1"/>
    <property type="molecule type" value="Genomic_DNA"/>
</dbReference>
<dbReference type="RefSeq" id="WP_011426286.1">
    <property type="nucleotide sequence ID" value="NC_007761.1"/>
</dbReference>
<dbReference type="SMR" id="Q2K5S3"/>
<dbReference type="KEGG" id="ret:RHE_CH03046"/>
<dbReference type="eggNOG" id="COG0408">
    <property type="taxonomic scope" value="Bacteria"/>
</dbReference>
<dbReference type="HOGENOM" id="CLU_026169_0_1_5"/>
<dbReference type="OrthoDB" id="9777553at2"/>
<dbReference type="UniPathway" id="UPA00251">
    <property type="reaction ID" value="UER00322"/>
</dbReference>
<dbReference type="Proteomes" id="UP000001936">
    <property type="component" value="Chromosome"/>
</dbReference>
<dbReference type="GO" id="GO:0005737">
    <property type="term" value="C:cytoplasm"/>
    <property type="evidence" value="ECO:0007669"/>
    <property type="project" value="UniProtKB-SubCell"/>
</dbReference>
<dbReference type="GO" id="GO:0004109">
    <property type="term" value="F:coproporphyrinogen oxidase activity"/>
    <property type="evidence" value="ECO:0007669"/>
    <property type="project" value="UniProtKB-UniRule"/>
</dbReference>
<dbReference type="GO" id="GO:0046872">
    <property type="term" value="F:metal ion binding"/>
    <property type="evidence" value="ECO:0007669"/>
    <property type="project" value="UniProtKB-KW"/>
</dbReference>
<dbReference type="GO" id="GO:0042803">
    <property type="term" value="F:protein homodimerization activity"/>
    <property type="evidence" value="ECO:0000250"/>
    <property type="project" value="UniProtKB"/>
</dbReference>
<dbReference type="GO" id="GO:0006782">
    <property type="term" value="P:protoporphyrinogen IX biosynthetic process"/>
    <property type="evidence" value="ECO:0007669"/>
    <property type="project" value="UniProtKB-UniRule"/>
</dbReference>
<dbReference type="FunFam" id="3.40.1500.10:FF:000005">
    <property type="entry name" value="Oxygen-dependent coproporphyrinogen-III oxidase"/>
    <property type="match status" value="1"/>
</dbReference>
<dbReference type="Gene3D" id="3.40.1500.10">
    <property type="entry name" value="Coproporphyrinogen III oxidase, aerobic"/>
    <property type="match status" value="1"/>
</dbReference>
<dbReference type="HAMAP" id="MF_00333">
    <property type="entry name" value="Coprogen_oxidas"/>
    <property type="match status" value="1"/>
</dbReference>
<dbReference type="InterPro" id="IPR001260">
    <property type="entry name" value="Coprogen_oxidase_aer"/>
</dbReference>
<dbReference type="InterPro" id="IPR036406">
    <property type="entry name" value="Coprogen_oxidase_aer_sf"/>
</dbReference>
<dbReference type="InterPro" id="IPR018375">
    <property type="entry name" value="Coprogen_oxidase_CS"/>
</dbReference>
<dbReference type="NCBIfam" id="NF003727">
    <property type="entry name" value="PRK05330.1"/>
    <property type="match status" value="1"/>
</dbReference>
<dbReference type="PANTHER" id="PTHR10755">
    <property type="entry name" value="COPROPORPHYRINOGEN III OXIDASE, MITOCHONDRIAL"/>
    <property type="match status" value="1"/>
</dbReference>
<dbReference type="PANTHER" id="PTHR10755:SF0">
    <property type="entry name" value="OXYGEN-DEPENDENT COPROPORPHYRINOGEN-III OXIDASE, MITOCHONDRIAL"/>
    <property type="match status" value="1"/>
</dbReference>
<dbReference type="Pfam" id="PF01218">
    <property type="entry name" value="Coprogen_oxidas"/>
    <property type="match status" value="1"/>
</dbReference>
<dbReference type="PIRSF" id="PIRSF000166">
    <property type="entry name" value="Coproporphyri_ox"/>
    <property type="match status" value="1"/>
</dbReference>
<dbReference type="PRINTS" id="PR00073">
    <property type="entry name" value="COPRGNOXDASE"/>
</dbReference>
<dbReference type="SUPFAM" id="SSF102886">
    <property type="entry name" value="Coproporphyrinogen III oxidase"/>
    <property type="match status" value="1"/>
</dbReference>
<dbReference type="PROSITE" id="PS01021">
    <property type="entry name" value="COPROGEN_OXIDASE"/>
    <property type="match status" value="1"/>
</dbReference>